<keyword id="KW-0067">ATP-binding</keyword>
<keyword id="KW-0418">Kinase</keyword>
<keyword id="KW-0545">Nucleotide biosynthesis</keyword>
<keyword id="KW-0547">Nucleotide-binding</keyword>
<keyword id="KW-1185">Reference proteome</keyword>
<keyword id="KW-0808">Transferase</keyword>
<name>KTHY1_SACS2</name>
<comment type="catalytic activity">
    <reaction>
        <text>dTMP + ATP = dTDP + ADP</text>
        <dbReference type="Rhea" id="RHEA:13517"/>
        <dbReference type="ChEBI" id="CHEBI:30616"/>
        <dbReference type="ChEBI" id="CHEBI:58369"/>
        <dbReference type="ChEBI" id="CHEBI:63528"/>
        <dbReference type="ChEBI" id="CHEBI:456216"/>
        <dbReference type="EC" id="2.7.4.9"/>
    </reaction>
</comment>
<comment type="similarity">
    <text evidence="2">Belongs to the thymidylate kinase family.</text>
</comment>
<sequence length="189" mass="21889">MQKLIAIEGIDGSGKTTLANLLKEHLESKMKLNVIVTREPFSEDIIKLIEKIGWNDPILLVLLFAADREIHVNWLSKIKDADLIILDRYYFSSIAYQGALGVDEQWIKMVNSYFPKPDMVILLDLPIEVAISRIKNDKFNFEEKIKSLAKVREKYLKLAKEYNFYVVDASKDKNEVLEQAIKIIQKNLF</sequence>
<proteinExistence type="inferred from homology"/>
<evidence type="ECO:0000255" key="1"/>
<evidence type="ECO:0000305" key="2"/>
<dbReference type="EC" id="2.7.4.9"/>
<dbReference type="EMBL" id="Y18930">
    <property type="protein sequence ID" value="CAB57523.1"/>
    <property type="molecule type" value="Genomic_DNA"/>
</dbReference>
<dbReference type="EMBL" id="AE006641">
    <property type="protein sequence ID" value="AAK41077.1"/>
    <property type="molecule type" value="Genomic_DNA"/>
</dbReference>
<dbReference type="PIR" id="F90227">
    <property type="entry name" value="F90227"/>
</dbReference>
<dbReference type="RefSeq" id="WP_010923072.1">
    <property type="nucleotide sequence ID" value="NC_002754.1"/>
</dbReference>
<dbReference type="SMR" id="Q9UXG7"/>
<dbReference type="FunCoup" id="Q9UXG7">
    <property type="interactions" value="141"/>
</dbReference>
<dbReference type="STRING" id="273057.SSO0780"/>
<dbReference type="PaxDb" id="273057-SSO0780"/>
<dbReference type="EnsemblBacteria" id="AAK41077">
    <property type="protein sequence ID" value="AAK41077"/>
    <property type="gene ID" value="SSO0780"/>
</dbReference>
<dbReference type="GeneID" id="7806740"/>
<dbReference type="GeneID" id="7811867"/>
<dbReference type="KEGG" id="sso:SSO0780"/>
<dbReference type="PATRIC" id="fig|273057.12.peg.781"/>
<dbReference type="eggNOG" id="arCOG01891">
    <property type="taxonomic scope" value="Archaea"/>
</dbReference>
<dbReference type="HOGENOM" id="CLU_049131_1_3_2"/>
<dbReference type="InParanoid" id="Q9UXG7"/>
<dbReference type="PhylomeDB" id="Q9UXG7"/>
<dbReference type="Proteomes" id="UP000001974">
    <property type="component" value="Chromosome"/>
</dbReference>
<dbReference type="GO" id="GO:0005737">
    <property type="term" value="C:cytoplasm"/>
    <property type="evidence" value="ECO:0000318"/>
    <property type="project" value="GO_Central"/>
</dbReference>
<dbReference type="GO" id="GO:0005524">
    <property type="term" value="F:ATP binding"/>
    <property type="evidence" value="ECO:0007669"/>
    <property type="project" value="UniProtKB-UniRule"/>
</dbReference>
<dbReference type="GO" id="GO:0004798">
    <property type="term" value="F:dTMP kinase activity"/>
    <property type="evidence" value="ECO:0000318"/>
    <property type="project" value="GO_Central"/>
</dbReference>
<dbReference type="GO" id="GO:0006233">
    <property type="term" value="P:dTDP biosynthetic process"/>
    <property type="evidence" value="ECO:0000318"/>
    <property type="project" value="GO_Central"/>
</dbReference>
<dbReference type="GO" id="GO:0006235">
    <property type="term" value="P:dTTP biosynthetic process"/>
    <property type="evidence" value="ECO:0000318"/>
    <property type="project" value="GO_Central"/>
</dbReference>
<dbReference type="GO" id="GO:0006227">
    <property type="term" value="P:dUDP biosynthetic process"/>
    <property type="evidence" value="ECO:0000318"/>
    <property type="project" value="GO_Central"/>
</dbReference>
<dbReference type="CDD" id="cd01672">
    <property type="entry name" value="TMPK"/>
    <property type="match status" value="1"/>
</dbReference>
<dbReference type="Gene3D" id="3.40.50.300">
    <property type="entry name" value="P-loop containing nucleotide triphosphate hydrolases"/>
    <property type="match status" value="1"/>
</dbReference>
<dbReference type="HAMAP" id="MF_00165">
    <property type="entry name" value="Thymidylate_kinase"/>
    <property type="match status" value="1"/>
</dbReference>
<dbReference type="InterPro" id="IPR027417">
    <property type="entry name" value="P-loop_NTPase"/>
</dbReference>
<dbReference type="InterPro" id="IPR039430">
    <property type="entry name" value="Thymidylate_kin-like_dom"/>
</dbReference>
<dbReference type="InterPro" id="IPR018095">
    <property type="entry name" value="Thymidylate_kin_CS"/>
</dbReference>
<dbReference type="InterPro" id="IPR018094">
    <property type="entry name" value="Thymidylate_kinase"/>
</dbReference>
<dbReference type="NCBIfam" id="TIGR00041">
    <property type="entry name" value="DTMP_kinase"/>
    <property type="match status" value="1"/>
</dbReference>
<dbReference type="PANTHER" id="PTHR10344">
    <property type="entry name" value="THYMIDYLATE KINASE"/>
    <property type="match status" value="1"/>
</dbReference>
<dbReference type="PANTHER" id="PTHR10344:SF4">
    <property type="entry name" value="UMP-CMP KINASE 2, MITOCHONDRIAL"/>
    <property type="match status" value="1"/>
</dbReference>
<dbReference type="Pfam" id="PF02223">
    <property type="entry name" value="Thymidylate_kin"/>
    <property type="match status" value="1"/>
</dbReference>
<dbReference type="SUPFAM" id="SSF52540">
    <property type="entry name" value="P-loop containing nucleoside triphosphate hydrolases"/>
    <property type="match status" value="1"/>
</dbReference>
<dbReference type="PROSITE" id="PS01331">
    <property type="entry name" value="THYMIDYLATE_KINASE"/>
    <property type="match status" value="1"/>
</dbReference>
<gene>
    <name type="primary">tmk1</name>
    <name type="synonym">tmk</name>
    <name type="ordered locus">SSO0780</name>
    <name type="ORF">C40_016</name>
</gene>
<organism>
    <name type="scientific">Saccharolobus solfataricus (strain ATCC 35092 / DSM 1617 / JCM 11322 / P2)</name>
    <name type="common">Sulfolobus solfataricus</name>
    <dbReference type="NCBI Taxonomy" id="273057"/>
    <lineage>
        <taxon>Archaea</taxon>
        <taxon>Thermoproteota</taxon>
        <taxon>Thermoprotei</taxon>
        <taxon>Sulfolobales</taxon>
        <taxon>Sulfolobaceae</taxon>
        <taxon>Saccharolobus</taxon>
    </lineage>
</organism>
<protein>
    <recommendedName>
        <fullName>Probable thymidylate kinase 1</fullName>
        <ecNumber>2.7.4.9</ecNumber>
    </recommendedName>
    <alternativeName>
        <fullName>dTMP kinase 1</fullName>
    </alternativeName>
</protein>
<feature type="chain" id="PRO_0000155398" description="Probable thymidylate kinase 1">
    <location>
        <begin position="1"/>
        <end position="189"/>
    </location>
</feature>
<feature type="binding site" evidence="1">
    <location>
        <begin position="9"/>
        <end position="16"/>
    </location>
    <ligand>
        <name>ATP</name>
        <dbReference type="ChEBI" id="CHEBI:30616"/>
    </ligand>
</feature>
<reference key="1">
    <citation type="journal article" date="2000" name="Genome">
        <title>Gene content and organization of a 281-kbp contig from the genome of the extremely thermophilic archaeon, Sulfolobus solfataricus P2.</title>
        <authorList>
            <person name="Charlebois R.L."/>
            <person name="Singh R.K."/>
            <person name="Chan-Weiher C.C.-Y."/>
            <person name="Allard G."/>
            <person name="Chow C."/>
            <person name="Confalonieri F."/>
            <person name="Curtis B."/>
            <person name="Duguet M."/>
            <person name="Erauso G."/>
            <person name="Faguy D."/>
            <person name="Gaasterland T."/>
            <person name="Garrett R.A."/>
            <person name="Gordon P."/>
            <person name="Jeffries A.C."/>
            <person name="Kozera C."/>
            <person name="Kushwaha N."/>
            <person name="Lafleur E."/>
            <person name="Medina N."/>
            <person name="Peng X."/>
            <person name="Penny S.L."/>
            <person name="She Q."/>
            <person name="St Jean A."/>
            <person name="van der Oost J."/>
            <person name="Young F."/>
            <person name="Zivanovic Y."/>
            <person name="Doolittle W.F."/>
            <person name="Ragan M.A."/>
            <person name="Sensen C.W."/>
        </authorList>
    </citation>
    <scope>NUCLEOTIDE SEQUENCE [LARGE SCALE GENOMIC DNA]</scope>
    <source>
        <strain>ATCC 35092 / DSM 1617 / JCM 11322 / P2</strain>
    </source>
</reference>
<reference key="2">
    <citation type="journal article" date="2001" name="Proc. Natl. Acad. Sci. U.S.A.">
        <title>The complete genome of the crenarchaeon Sulfolobus solfataricus P2.</title>
        <authorList>
            <person name="She Q."/>
            <person name="Singh R.K."/>
            <person name="Confalonieri F."/>
            <person name="Zivanovic Y."/>
            <person name="Allard G."/>
            <person name="Awayez M.J."/>
            <person name="Chan-Weiher C.C.-Y."/>
            <person name="Clausen I.G."/>
            <person name="Curtis B.A."/>
            <person name="De Moors A."/>
            <person name="Erauso G."/>
            <person name="Fletcher C."/>
            <person name="Gordon P.M.K."/>
            <person name="Heikamp-de Jong I."/>
            <person name="Jeffries A.C."/>
            <person name="Kozera C.J."/>
            <person name="Medina N."/>
            <person name="Peng X."/>
            <person name="Thi-Ngoc H.P."/>
            <person name="Redder P."/>
            <person name="Schenk M.E."/>
            <person name="Theriault C."/>
            <person name="Tolstrup N."/>
            <person name="Charlebois R.L."/>
            <person name="Doolittle W.F."/>
            <person name="Duguet M."/>
            <person name="Gaasterland T."/>
            <person name="Garrett R.A."/>
            <person name="Ragan M.A."/>
            <person name="Sensen C.W."/>
            <person name="Van der Oost J."/>
        </authorList>
    </citation>
    <scope>NUCLEOTIDE SEQUENCE [LARGE SCALE GENOMIC DNA]</scope>
    <source>
        <strain>ATCC 35092 / DSM 1617 / JCM 11322 / P2</strain>
    </source>
</reference>
<accession>Q9UXG7</accession>